<accession>Q89J94</accession>
<gene>
    <name evidence="1" type="primary">rplN</name>
    <name type="ordered locus">bll5390</name>
</gene>
<protein>
    <recommendedName>
        <fullName evidence="1">Large ribosomal subunit protein uL14</fullName>
    </recommendedName>
    <alternativeName>
        <fullName evidence="2">50S ribosomal protein L14</fullName>
    </alternativeName>
</protein>
<proteinExistence type="inferred from homology"/>
<organism>
    <name type="scientific">Bradyrhizobium diazoefficiens (strain JCM 10833 / BCRC 13528 / IAM 13628 / NBRC 14792 / USDA 110)</name>
    <dbReference type="NCBI Taxonomy" id="224911"/>
    <lineage>
        <taxon>Bacteria</taxon>
        <taxon>Pseudomonadati</taxon>
        <taxon>Pseudomonadota</taxon>
        <taxon>Alphaproteobacteria</taxon>
        <taxon>Hyphomicrobiales</taxon>
        <taxon>Nitrobacteraceae</taxon>
        <taxon>Bradyrhizobium</taxon>
    </lineage>
</organism>
<comment type="function">
    <text evidence="1">Binds to 23S rRNA. Forms part of two intersubunit bridges in the 70S ribosome.</text>
</comment>
<comment type="subunit">
    <text evidence="1">Part of the 50S ribosomal subunit. Forms a cluster with proteins L3 and L19. In the 70S ribosome, L14 and L19 interact and together make contacts with the 16S rRNA in bridges B5 and B8.</text>
</comment>
<comment type="similarity">
    <text evidence="1">Belongs to the universal ribosomal protein uL14 family.</text>
</comment>
<sequence>MIQMQTNLDVADNSGARRVMCIKVLGGSKRRYATIGDIIVVSIKEAIPRGKVKKGDVMKAVVVRVRKDIRRADGSVIRFDRNAAVLINNQSEPVGTRIFGPVPRELRAKNHMKIISLAPEVL</sequence>
<feature type="chain" id="PRO_0000266455" description="Large ribosomal subunit protein uL14">
    <location>
        <begin position="1"/>
        <end position="122"/>
    </location>
</feature>
<reference key="1">
    <citation type="journal article" date="2002" name="DNA Res.">
        <title>Complete genomic sequence of nitrogen-fixing symbiotic bacterium Bradyrhizobium japonicum USDA110.</title>
        <authorList>
            <person name="Kaneko T."/>
            <person name="Nakamura Y."/>
            <person name="Sato S."/>
            <person name="Minamisawa K."/>
            <person name="Uchiumi T."/>
            <person name="Sasamoto S."/>
            <person name="Watanabe A."/>
            <person name="Idesawa K."/>
            <person name="Iriguchi M."/>
            <person name="Kawashima K."/>
            <person name="Kohara M."/>
            <person name="Matsumoto M."/>
            <person name="Shimpo S."/>
            <person name="Tsuruoka H."/>
            <person name="Wada T."/>
            <person name="Yamada M."/>
            <person name="Tabata S."/>
        </authorList>
    </citation>
    <scope>NUCLEOTIDE SEQUENCE [LARGE SCALE GENOMIC DNA]</scope>
    <source>
        <strain>JCM 10833 / BCRC 13528 / IAM 13628 / NBRC 14792 / USDA 110</strain>
    </source>
</reference>
<keyword id="KW-1185">Reference proteome</keyword>
<keyword id="KW-0687">Ribonucleoprotein</keyword>
<keyword id="KW-0689">Ribosomal protein</keyword>
<keyword id="KW-0694">RNA-binding</keyword>
<keyword id="KW-0699">rRNA-binding</keyword>
<evidence type="ECO:0000255" key="1">
    <source>
        <dbReference type="HAMAP-Rule" id="MF_01367"/>
    </source>
</evidence>
<evidence type="ECO:0000305" key="2"/>
<name>RL14_BRADU</name>
<dbReference type="EMBL" id="BA000040">
    <property type="protein sequence ID" value="BAC50655.1"/>
    <property type="molecule type" value="Genomic_DNA"/>
</dbReference>
<dbReference type="RefSeq" id="NP_772030.1">
    <property type="nucleotide sequence ID" value="NC_004463.1"/>
</dbReference>
<dbReference type="RefSeq" id="WP_007603030.1">
    <property type="nucleotide sequence ID" value="NZ_CP011360.1"/>
</dbReference>
<dbReference type="SMR" id="Q89J94"/>
<dbReference type="FunCoup" id="Q89J94">
    <property type="interactions" value="791"/>
</dbReference>
<dbReference type="STRING" id="224911.AAV28_24360"/>
<dbReference type="EnsemblBacteria" id="BAC50655">
    <property type="protein sequence ID" value="BAC50655"/>
    <property type="gene ID" value="BAC50655"/>
</dbReference>
<dbReference type="GeneID" id="93215314"/>
<dbReference type="KEGG" id="bja:bll5390"/>
<dbReference type="PATRIC" id="fig|224911.44.peg.5289"/>
<dbReference type="eggNOG" id="COG0093">
    <property type="taxonomic scope" value="Bacteria"/>
</dbReference>
<dbReference type="HOGENOM" id="CLU_095071_2_1_5"/>
<dbReference type="InParanoid" id="Q89J94"/>
<dbReference type="OrthoDB" id="9806379at2"/>
<dbReference type="PhylomeDB" id="Q89J94"/>
<dbReference type="Proteomes" id="UP000002526">
    <property type="component" value="Chromosome"/>
</dbReference>
<dbReference type="GO" id="GO:0022625">
    <property type="term" value="C:cytosolic large ribosomal subunit"/>
    <property type="evidence" value="ECO:0000318"/>
    <property type="project" value="GO_Central"/>
</dbReference>
<dbReference type="GO" id="GO:0070180">
    <property type="term" value="F:large ribosomal subunit rRNA binding"/>
    <property type="evidence" value="ECO:0000318"/>
    <property type="project" value="GO_Central"/>
</dbReference>
<dbReference type="GO" id="GO:0003735">
    <property type="term" value="F:structural constituent of ribosome"/>
    <property type="evidence" value="ECO:0000318"/>
    <property type="project" value="GO_Central"/>
</dbReference>
<dbReference type="GO" id="GO:0006412">
    <property type="term" value="P:translation"/>
    <property type="evidence" value="ECO:0007669"/>
    <property type="project" value="UniProtKB-UniRule"/>
</dbReference>
<dbReference type="CDD" id="cd00337">
    <property type="entry name" value="Ribosomal_uL14"/>
    <property type="match status" value="1"/>
</dbReference>
<dbReference type="FunFam" id="2.40.150.20:FF:000001">
    <property type="entry name" value="50S ribosomal protein L14"/>
    <property type="match status" value="1"/>
</dbReference>
<dbReference type="Gene3D" id="2.40.150.20">
    <property type="entry name" value="Ribosomal protein L14"/>
    <property type="match status" value="1"/>
</dbReference>
<dbReference type="HAMAP" id="MF_01367">
    <property type="entry name" value="Ribosomal_uL14"/>
    <property type="match status" value="1"/>
</dbReference>
<dbReference type="InterPro" id="IPR000218">
    <property type="entry name" value="Ribosomal_uL14"/>
</dbReference>
<dbReference type="InterPro" id="IPR005745">
    <property type="entry name" value="Ribosomal_uL14_bac-type"/>
</dbReference>
<dbReference type="InterPro" id="IPR019972">
    <property type="entry name" value="Ribosomal_uL14_CS"/>
</dbReference>
<dbReference type="InterPro" id="IPR036853">
    <property type="entry name" value="Ribosomal_uL14_sf"/>
</dbReference>
<dbReference type="NCBIfam" id="TIGR01067">
    <property type="entry name" value="rplN_bact"/>
    <property type="match status" value="1"/>
</dbReference>
<dbReference type="PANTHER" id="PTHR11761">
    <property type="entry name" value="50S/60S RIBOSOMAL PROTEIN L14/L23"/>
    <property type="match status" value="1"/>
</dbReference>
<dbReference type="PANTHER" id="PTHR11761:SF3">
    <property type="entry name" value="LARGE RIBOSOMAL SUBUNIT PROTEIN UL14M"/>
    <property type="match status" value="1"/>
</dbReference>
<dbReference type="Pfam" id="PF00238">
    <property type="entry name" value="Ribosomal_L14"/>
    <property type="match status" value="1"/>
</dbReference>
<dbReference type="SMART" id="SM01374">
    <property type="entry name" value="Ribosomal_L14"/>
    <property type="match status" value="1"/>
</dbReference>
<dbReference type="SUPFAM" id="SSF50193">
    <property type="entry name" value="Ribosomal protein L14"/>
    <property type="match status" value="1"/>
</dbReference>
<dbReference type="PROSITE" id="PS00049">
    <property type="entry name" value="RIBOSOMAL_L14"/>
    <property type="match status" value="1"/>
</dbReference>